<accession>Q7TTT1</accession>
<reference key="1">
    <citation type="journal article" date="2003" name="Nature">
        <title>The genome of a motile marine Synechococcus.</title>
        <authorList>
            <person name="Palenik B."/>
            <person name="Brahamsha B."/>
            <person name="Larimer F.W."/>
            <person name="Land M.L."/>
            <person name="Hauser L."/>
            <person name="Chain P."/>
            <person name="Lamerdin J.E."/>
            <person name="Regala W."/>
            <person name="Allen E.E."/>
            <person name="McCarren J."/>
            <person name="Paulsen I.T."/>
            <person name="Dufresne A."/>
            <person name="Partensky F."/>
            <person name="Webb E.A."/>
            <person name="Waterbury J."/>
        </authorList>
    </citation>
    <scope>NUCLEOTIDE SEQUENCE [LARGE SCALE GENOMIC DNA]</scope>
    <source>
        <strain>WH8102</strain>
    </source>
</reference>
<organism>
    <name type="scientific">Parasynechococcus marenigrum (strain WH8102)</name>
    <dbReference type="NCBI Taxonomy" id="84588"/>
    <lineage>
        <taxon>Bacteria</taxon>
        <taxon>Bacillati</taxon>
        <taxon>Cyanobacteriota</taxon>
        <taxon>Cyanophyceae</taxon>
        <taxon>Synechococcales</taxon>
        <taxon>Prochlorococcaceae</taxon>
        <taxon>Parasynechococcus</taxon>
        <taxon>Parasynechococcus marenigrum</taxon>
    </lineage>
</organism>
<protein>
    <recommendedName>
        <fullName evidence="1">tRNA pseudouridine synthase A</fullName>
        <ecNumber evidence="1">5.4.99.12</ecNumber>
    </recommendedName>
    <alternativeName>
        <fullName evidence="1">tRNA pseudouridine(38-40) synthase</fullName>
    </alternativeName>
    <alternativeName>
        <fullName evidence="1">tRNA pseudouridylate synthase I</fullName>
    </alternativeName>
    <alternativeName>
        <fullName evidence="1">tRNA-uridine isomerase I</fullName>
    </alternativeName>
</protein>
<gene>
    <name evidence="1" type="primary">truA</name>
    <name type="ordered locus">SYNW2092</name>
</gene>
<dbReference type="EC" id="5.4.99.12" evidence="1"/>
<dbReference type="EMBL" id="BX569694">
    <property type="protein sequence ID" value="CAE08607.1"/>
    <property type="molecule type" value="Genomic_DNA"/>
</dbReference>
<dbReference type="RefSeq" id="WP_011128949.1">
    <property type="nucleotide sequence ID" value="NC_005070.1"/>
</dbReference>
<dbReference type="SMR" id="Q7TTT1"/>
<dbReference type="STRING" id="84588.SYNW2092"/>
<dbReference type="KEGG" id="syw:SYNW2092"/>
<dbReference type="eggNOG" id="COG0101">
    <property type="taxonomic scope" value="Bacteria"/>
</dbReference>
<dbReference type="HOGENOM" id="CLU_014673_0_1_3"/>
<dbReference type="Proteomes" id="UP000001422">
    <property type="component" value="Chromosome"/>
</dbReference>
<dbReference type="GO" id="GO:0003723">
    <property type="term" value="F:RNA binding"/>
    <property type="evidence" value="ECO:0007669"/>
    <property type="project" value="InterPro"/>
</dbReference>
<dbReference type="GO" id="GO:0160147">
    <property type="term" value="F:tRNA pseudouridine(38-40) synthase activity"/>
    <property type="evidence" value="ECO:0007669"/>
    <property type="project" value="UniProtKB-EC"/>
</dbReference>
<dbReference type="GO" id="GO:0031119">
    <property type="term" value="P:tRNA pseudouridine synthesis"/>
    <property type="evidence" value="ECO:0007669"/>
    <property type="project" value="UniProtKB-UniRule"/>
</dbReference>
<dbReference type="CDD" id="cd02570">
    <property type="entry name" value="PseudoU_synth_EcTruA"/>
    <property type="match status" value="1"/>
</dbReference>
<dbReference type="FunFam" id="3.30.70.580:FF:000001">
    <property type="entry name" value="tRNA pseudouridine synthase A"/>
    <property type="match status" value="1"/>
</dbReference>
<dbReference type="Gene3D" id="3.30.70.660">
    <property type="entry name" value="Pseudouridine synthase I, catalytic domain, C-terminal subdomain"/>
    <property type="match status" value="1"/>
</dbReference>
<dbReference type="Gene3D" id="3.30.70.580">
    <property type="entry name" value="Pseudouridine synthase I, catalytic domain, N-terminal subdomain"/>
    <property type="match status" value="1"/>
</dbReference>
<dbReference type="HAMAP" id="MF_00171">
    <property type="entry name" value="TruA"/>
    <property type="match status" value="1"/>
</dbReference>
<dbReference type="InterPro" id="IPR020103">
    <property type="entry name" value="PsdUridine_synth_cat_dom_sf"/>
</dbReference>
<dbReference type="InterPro" id="IPR001406">
    <property type="entry name" value="PsdUridine_synth_TruA"/>
</dbReference>
<dbReference type="InterPro" id="IPR020097">
    <property type="entry name" value="PsdUridine_synth_TruA_a/b_dom"/>
</dbReference>
<dbReference type="InterPro" id="IPR020095">
    <property type="entry name" value="PsdUridine_synth_TruA_C"/>
</dbReference>
<dbReference type="InterPro" id="IPR020094">
    <property type="entry name" value="TruA/RsuA/RluB/E/F_N"/>
</dbReference>
<dbReference type="NCBIfam" id="TIGR00071">
    <property type="entry name" value="hisT_truA"/>
    <property type="match status" value="1"/>
</dbReference>
<dbReference type="PANTHER" id="PTHR11142">
    <property type="entry name" value="PSEUDOURIDYLATE SYNTHASE"/>
    <property type="match status" value="1"/>
</dbReference>
<dbReference type="PANTHER" id="PTHR11142:SF0">
    <property type="entry name" value="TRNA PSEUDOURIDINE SYNTHASE-LIKE 1"/>
    <property type="match status" value="1"/>
</dbReference>
<dbReference type="Pfam" id="PF01416">
    <property type="entry name" value="PseudoU_synth_1"/>
    <property type="match status" value="2"/>
</dbReference>
<dbReference type="PIRSF" id="PIRSF001430">
    <property type="entry name" value="tRNA_psdUrid_synth"/>
    <property type="match status" value="1"/>
</dbReference>
<dbReference type="SUPFAM" id="SSF55120">
    <property type="entry name" value="Pseudouridine synthase"/>
    <property type="match status" value="1"/>
</dbReference>
<evidence type="ECO:0000255" key="1">
    <source>
        <dbReference type="HAMAP-Rule" id="MF_00171"/>
    </source>
</evidence>
<sequence>MSSEPSSAAPESTIPRRIALSLQYEGSAFCGWQRQRNGNSVQAQLEAAIEQLDPYRPIQTFAAGRTDTGVHAAGQVVHFDCGDRIPPAKWAPALNGRLPFTIRVRESVLRPKDWHACYSATYRRYRYTIHNGRRPNLFLAPWSWHRYQLRLDESRMRDALNGMLGLHDFSAFMRAGSRRAHARTTVQEVDLVRQGDMVRVEIQASGFLYGMVRLLIAQLVAVGEHRLSVQDFEQRWRQRRRHEVREAAPGHGLCLLRAGYEQEIFTRAGWYDCQPWFFLAESDPPPDPPPLPEASGSEL</sequence>
<keyword id="KW-0413">Isomerase</keyword>
<keyword id="KW-0819">tRNA processing</keyword>
<feature type="chain" id="PRO_0000057472" description="tRNA pseudouridine synthase A">
    <location>
        <begin position="1"/>
        <end position="299"/>
    </location>
</feature>
<feature type="active site" description="Nucleophile" evidence="1">
    <location>
        <position position="67"/>
    </location>
</feature>
<feature type="binding site" evidence="1">
    <location>
        <position position="125"/>
    </location>
    <ligand>
        <name>substrate</name>
    </ligand>
</feature>
<comment type="function">
    <text evidence="1">Formation of pseudouridine at positions 38, 39 and 40 in the anticodon stem and loop of transfer RNAs.</text>
</comment>
<comment type="catalytic activity">
    <reaction evidence="1">
        <text>uridine(38/39/40) in tRNA = pseudouridine(38/39/40) in tRNA</text>
        <dbReference type="Rhea" id="RHEA:22376"/>
        <dbReference type="Rhea" id="RHEA-COMP:10085"/>
        <dbReference type="Rhea" id="RHEA-COMP:10087"/>
        <dbReference type="ChEBI" id="CHEBI:65314"/>
        <dbReference type="ChEBI" id="CHEBI:65315"/>
        <dbReference type="EC" id="5.4.99.12"/>
    </reaction>
</comment>
<comment type="subunit">
    <text evidence="1">Homodimer.</text>
</comment>
<comment type="similarity">
    <text evidence="1">Belongs to the tRNA pseudouridine synthase TruA family.</text>
</comment>
<proteinExistence type="inferred from homology"/>
<name>TRUA_PARMW</name>